<protein>
    <recommendedName>
        <fullName evidence="1">Large ribosomal subunit protein uL4</fullName>
    </recommendedName>
    <alternativeName>
        <fullName evidence="3">50S ribosomal protein L4</fullName>
    </alternativeName>
</protein>
<comment type="function">
    <text evidence="1">One of the primary rRNA binding proteins, this protein initially binds near the 5'-end of the 23S rRNA. It is important during the early stages of 50S assembly. It makes multiple contacts with different domains of the 23S rRNA in the assembled 50S subunit and ribosome.</text>
</comment>
<comment type="function">
    <text evidence="1">Forms part of the polypeptide exit tunnel.</text>
</comment>
<comment type="subunit">
    <text evidence="1">Part of the 50S ribosomal subunit.</text>
</comment>
<comment type="similarity">
    <text evidence="1">Belongs to the universal ribosomal protein uL4 family.</text>
</comment>
<accession>Q12SV8</accession>
<gene>
    <name evidence="1" type="primary">rplD</name>
    <name type="ordered locus">Sden_0171</name>
</gene>
<proteinExistence type="inferred from homology"/>
<evidence type="ECO:0000255" key="1">
    <source>
        <dbReference type="HAMAP-Rule" id="MF_01328"/>
    </source>
</evidence>
<evidence type="ECO:0000256" key="2">
    <source>
        <dbReference type="SAM" id="MobiDB-lite"/>
    </source>
</evidence>
<evidence type="ECO:0000305" key="3"/>
<name>RL4_SHEDO</name>
<organism>
    <name type="scientific">Shewanella denitrificans (strain OS217 / ATCC BAA-1090 / DSM 15013)</name>
    <dbReference type="NCBI Taxonomy" id="318161"/>
    <lineage>
        <taxon>Bacteria</taxon>
        <taxon>Pseudomonadati</taxon>
        <taxon>Pseudomonadota</taxon>
        <taxon>Gammaproteobacteria</taxon>
        <taxon>Alteromonadales</taxon>
        <taxon>Shewanellaceae</taxon>
        <taxon>Shewanella</taxon>
    </lineage>
</organism>
<reference key="1">
    <citation type="submission" date="2006-03" db="EMBL/GenBank/DDBJ databases">
        <title>Complete sequence of Shewanella denitrificans OS217.</title>
        <authorList>
            <consortium name="US DOE Joint Genome Institute"/>
            <person name="Copeland A."/>
            <person name="Lucas S."/>
            <person name="Lapidus A."/>
            <person name="Barry K."/>
            <person name="Detter J.C."/>
            <person name="Glavina del Rio T."/>
            <person name="Hammon N."/>
            <person name="Israni S."/>
            <person name="Dalin E."/>
            <person name="Tice H."/>
            <person name="Pitluck S."/>
            <person name="Brettin T."/>
            <person name="Bruce D."/>
            <person name="Han C."/>
            <person name="Tapia R."/>
            <person name="Gilna P."/>
            <person name="Kiss H."/>
            <person name="Schmutz J."/>
            <person name="Larimer F."/>
            <person name="Land M."/>
            <person name="Hauser L."/>
            <person name="Kyrpides N."/>
            <person name="Lykidis A."/>
            <person name="Richardson P."/>
        </authorList>
    </citation>
    <scope>NUCLEOTIDE SEQUENCE [LARGE SCALE GENOMIC DNA]</scope>
    <source>
        <strain>OS217 / ATCC BAA-1090 / DSM 15013</strain>
    </source>
</reference>
<sequence length="201" mass="21979">MELVLKDAQSALEVSETTFGRDFNEALVHQVVVAYAANARQGTRAQKTRAEVTGSGKKPWRQKGTGRARAGSVKGPIWRGGGVTFAAKTQDHSQKVNKKMYRGALKSILSELVRQERLVVVESFGVEAPKTKELKAKLKAMNLEDVLIVTAEVDENLFLAARNLYKVDVRDVAGLDPVSLIAFNTVLVTADAVKQIEEMLA</sequence>
<dbReference type="EMBL" id="CP000302">
    <property type="protein sequence ID" value="ABE53468.1"/>
    <property type="molecule type" value="Genomic_DNA"/>
</dbReference>
<dbReference type="RefSeq" id="WP_006083599.1">
    <property type="nucleotide sequence ID" value="NC_007954.1"/>
</dbReference>
<dbReference type="SMR" id="Q12SV8"/>
<dbReference type="STRING" id="318161.Sden_0171"/>
<dbReference type="GeneID" id="67441761"/>
<dbReference type="KEGG" id="sdn:Sden_0171"/>
<dbReference type="eggNOG" id="COG0088">
    <property type="taxonomic scope" value="Bacteria"/>
</dbReference>
<dbReference type="HOGENOM" id="CLU_041575_5_2_6"/>
<dbReference type="OrthoDB" id="9803201at2"/>
<dbReference type="Proteomes" id="UP000001982">
    <property type="component" value="Chromosome"/>
</dbReference>
<dbReference type="GO" id="GO:1990904">
    <property type="term" value="C:ribonucleoprotein complex"/>
    <property type="evidence" value="ECO:0007669"/>
    <property type="project" value="UniProtKB-KW"/>
</dbReference>
<dbReference type="GO" id="GO:0005840">
    <property type="term" value="C:ribosome"/>
    <property type="evidence" value="ECO:0007669"/>
    <property type="project" value="UniProtKB-KW"/>
</dbReference>
<dbReference type="GO" id="GO:0019843">
    <property type="term" value="F:rRNA binding"/>
    <property type="evidence" value="ECO:0007669"/>
    <property type="project" value="UniProtKB-UniRule"/>
</dbReference>
<dbReference type="GO" id="GO:0003735">
    <property type="term" value="F:structural constituent of ribosome"/>
    <property type="evidence" value="ECO:0007669"/>
    <property type="project" value="InterPro"/>
</dbReference>
<dbReference type="GO" id="GO:0006412">
    <property type="term" value="P:translation"/>
    <property type="evidence" value="ECO:0007669"/>
    <property type="project" value="UniProtKB-UniRule"/>
</dbReference>
<dbReference type="FunFam" id="3.40.1370.10:FF:000001">
    <property type="entry name" value="50S ribosomal protein L4"/>
    <property type="match status" value="1"/>
</dbReference>
<dbReference type="Gene3D" id="3.40.1370.10">
    <property type="match status" value="1"/>
</dbReference>
<dbReference type="HAMAP" id="MF_01328_B">
    <property type="entry name" value="Ribosomal_uL4_B"/>
    <property type="match status" value="1"/>
</dbReference>
<dbReference type="InterPro" id="IPR002136">
    <property type="entry name" value="Ribosomal_uL4"/>
</dbReference>
<dbReference type="InterPro" id="IPR013005">
    <property type="entry name" value="Ribosomal_uL4-like"/>
</dbReference>
<dbReference type="InterPro" id="IPR023574">
    <property type="entry name" value="Ribosomal_uL4_dom_sf"/>
</dbReference>
<dbReference type="NCBIfam" id="TIGR03953">
    <property type="entry name" value="rplD_bact"/>
    <property type="match status" value="1"/>
</dbReference>
<dbReference type="PANTHER" id="PTHR10746">
    <property type="entry name" value="50S RIBOSOMAL PROTEIN L4"/>
    <property type="match status" value="1"/>
</dbReference>
<dbReference type="PANTHER" id="PTHR10746:SF6">
    <property type="entry name" value="LARGE RIBOSOMAL SUBUNIT PROTEIN UL4M"/>
    <property type="match status" value="1"/>
</dbReference>
<dbReference type="Pfam" id="PF00573">
    <property type="entry name" value="Ribosomal_L4"/>
    <property type="match status" value="1"/>
</dbReference>
<dbReference type="SUPFAM" id="SSF52166">
    <property type="entry name" value="Ribosomal protein L4"/>
    <property type="match status" value="1"/>
</dbReference>
<keyword id="KW-1185">Reference proteome</keyword>
<keyword id="KW-0687">Ribonucleoprotein</keyword>
<keyword id="KW-0689">Ribosomal protein</keyword>
<keyword id="KW-0694">RNA-binding</keyword>
<keyword id="KW-0699">rRNA-binding</keyword>
<feature type="chain" id="PRO_1000052493" description="Large ribosomal subunit protein uL4">
    <location>
        <begin position="1"/>
        <end position="201"/>
    </location>
</feature>
<feature type="region of interest" description="Disordered" evidence="2">
    <location>
        <begin position="45"/>
        <end position="72"/>
    </location>
</feature>